<accession>P49878</accession>
<keyword id="KW-0051">Antiviral defense</keyword>
<keyword id="KW-0202">Cytokine</keyword>
<keyword id="KW-1015">Disulfide bond</keyword>
<keyword id="KW-1185">Reference proteome</keyword>
<keyword id="KW-0964">Secreted</keyword>
<keyword id="KW-0732">Signal</keyword>
<comment type="function">
    <text>Produced by macrophages, IFN-alpha have antiviral activities. Interferon stimulates the production of two enzymes: a protein kinase and an oligoadenylate synthetase.</text>
</comment>
<comment type="subcellular location">
    <subcellularLocation>
        <location>Secreted</location>
    </subcellularLocation>
</comment>
<comment type="similarity">
    <text evidence="2">Belongs to the alpha/beta interferon family.</text>
</comment>
<organism>
    <name type="scientific">Bos taurus</name>
    <name type="common">Bovine</name>
    <dbReference type="NCBI Taxonomy" id="9913"/>
    <lineage>
        <taxon>Eukaryota</taxon>
        <taxon>Metazoa</taxon>
        <taxon>Chordata</taxon>
        <taxon>Craniata</taxon>
        <taxon>Vertebrata</taxon>
        <taxon>Euteleostomi</taxon>
        <taxon>Mammalia</taxon>
        <taxon>Eutheria</taxon>
        <taxon>Laurasiatheria</taxon>
        <taxon>Artiodactyla</taxon>
        <taxon>Ruminantia</taxon>
        <taxon>Pecora</taxon>
        <taxon>Bovidae</taxon>
        <taxon>Bovinae</taxon>
        <taxon>Bos</taxon>
    </lineage>
</organism>
<feature type="signal peptide" evidence="1">
    <location>
        <begin position="1"/>
        <end position="23"/>
    </location>
</feature>
<feature type="chain" id="PRO_0000016391" description="Interferon alpha-H">
    <location>
        <begin position="24"/>
        <end position="189"/>
    </location>
</feature>
<feature type="disulfide bond" evidence="1">
    <location>
        <begin position="24"/>
        <end position="122"/>
    </location>
</feature>
<feature type="disulfide bond" evidence="1">
    <location>
        <begin position="52"/>
        <end position="162"/>
    </location>
</feature>
<protein>
    <recommendedName>
        <fullName>Interferon alpha-H</fullName>
    </recommendedName>
    <alternativeName>
        <fullName>IFN-alpha8</fullName>
    </alternativeName>
</protein>
<dbReference type="EMBL" id="X93089">
    <property type="protein sequence ID" value="CAA63638.1"/>
    <property type="molecule type" value="mRNA"/>
</dbReference>
<dbReference type="RefSeq" id="NP_001165512.1">
    <property type="nucleotide sequence ID" value="NM_001172041.1"/>
</dbReference>
<dbReference type="SMR" id="P49878"/>
<dbReference type="FunCoup" id="P49878">
    <property type="interactions" value="324"/>
</dbReference>
<dbReference type="STRING" id="9913.ENSBTAP00000073016"/>
<dbReference type="PaxDb" id="9913-ENSBTAP00000034345"/>
<dbReference type="GeneID" id="100329207"/>
<dbReference type="KEGG" id="bta:100329207"/>
<dbReference type="CTD" id="100329207"/>
<dbReference type="eggNOG" id="ENOG502SQAC">
    <property type="taxonomic scope" value="Eukaryota"/>
</dbReference>
<dbReference type="InParanoid" id="P49878"/>
<dbReference type="OrthoDB" id="9708897at2759"/>
<dbReference type="Proteomes" id="UP000009136">
    <property type="component" value="Unplaced"/>
</dbReference>
<dbReference type="GO" id="GO:0005615">
    <property type="term" value="C:extracellular space"/>
    <property type="evidence" value="ECO:0000318"/>
    <property type="project" value="GO_Central"/>
</dbReference>
<dbReference type="GO" id="GO:0005125">
    <property type="term" value="F:cytokine activity"/>
    <property type="evidence" value="ECO:0000318"/>
    <property type="project" value="GO_Central"/>
</dbReference>
<dbReference type="GO" id="GO:0005132">
    <property type="term" value="F:type I interferon receptor binding"/>
    <property type="evidence" value="ECO:0000318"/>
    <property type="project" value="GO_Central"/>
</dbReference>
<dbReference type="GO" id="GO:0002250">
    <property type="term" value="P:adaptive immune response"/>
    <property type="evidence" value="ECO:0000318"/>
    <property type="project" value="GO_Central"/>
</dbReference>
<dbReference type="GO" id="GO:0002312">
    <property type="term" value="P:B cell activation involved in immune response"/>
    <property type="evidence" value="ECO:0000318"/>
    <property type="project" value="GO_Central"/>
</dbReference>
<dbReference type="GO" id="GO:0051607">
    <property type="term" value="P:defense response to virus"/>
    <property type="evidence" value="ECO:0007669"/>
    <property type="project" value="UniProtKB-KW"/>
</dbReference>
<dbReference type="GO" id="GO:0006959">
    <property type="term" value="P:humoral immune response"/>
    <property type="evidence" value="ECO:0000318"/>
    <property type="project" value="GO_Central"/>
</dbReference>
<dbReference type="GO" id="GO:0002323">
    <property type="term" value="P:natural killer cell activation involved in immune response"/>
    <property type="evidence" value="ECO:0000318"/>
    <property type="project" value="GO_Central"/>
</dbReference>
<dbReference type="GO" id="GO:0009891">
    <property type="term" value="P:positive regulation of biosynthetic process"/>
    <property type="evidence" value="ECO:0007669"/>
    <property type="project" value="UniProtKB-ARBA"/>
</dbReference>
<dbReference type="GO" id="GO:0043330">
    <property type="term" value="P:response to exogenous dsRNA"/>
    <property type="evidence" value="ECO:0000318"/>
    <property type="project" value="GO_Central"/>
</dbReference>
<dbReference type="GO" id="GO:0002286">
    <property type="term" value="P:T cell activation involved in immune response"/>
    <property type="evidence" value="ECO:0000318"/>
    <property type="project" value="GO_Central"/>
</dbReference>
<dbReference type="GO" id="GO:0060337">
    <property type="term" value="P:type I interferon-mediated signaling pathway"/>
    <property type="evidence" value="ECO:0000318"/>
    <property type="project" value="GO_Central"/>
</dbReference>
<dbReference type="CDD" id="cd00095">
    <property type="entry name" value="IFab"/>
    <property type="match status" value="1"/>
</dbReference>
<dbReference type="FunFam" id="1.20.1250.10:FF:000001">
    <property type="entry name" value="Interferon alpha"/>
    <property type="match status" value="1"/>
</dbReference>
<dbReference type="Gene3D" id="1.20.1250.10">
    <property type="match status" value="1"/>
</dbReference>
<dbReference type="InterPro" id="IPR009079">
    <property type="entry name" value="4_helix_cytokine-like_core"/>
</dbReference>
<dbReference type="InterPro" id="IPR000471">
    <property type="entry name" value="Interferon_alpha/beta/delta"/>
</dbReference>
<dbReference type="PANTHER" id="PTHR11691:SF60">
    <property type="entry name" value="INTERFERON ALPHA-5"/>
    <property type="match status" value="1"/>
</dbReference>
<dbReference type="PANTHER" id="PTHR11691">
    <property type="entry name" value="TYPE I INTERFERON"/>
    <property type="match status" value="1"/>
</dbReference>
<dbReference type="Pfam" id="PF00143">
    <property type="entry name" value="Interferon"/>
    <property type="match status" value="1"/>
</dbReference>
<dbReference type="PRINTS" id="PR00266">
    <property type="entry name" value="INTERFERONAB"/>
</dbReference>
<dbReference type="SMART" id="SM00076">
    <property type="entry name" value="IFabd"/>
    <property type="match status" value="1"/>
</dbReference>
<dbReference type="SUPFAM" id="SSF47266">
    <property type="entry name" value="4-helical cytokines"/>
    <property type="match status" value="1"/>
</dbReference>
<dbReference type="PROSITE" id="PS00252">
    <property type="entry name" value="INTERFERON_A_B_D"/>
    <property type="match status" value="1"/>
</dbReference>
<name>IFNAH_BOVIN</name>
<evidence type="ECO:0000250" key="1"/>
<evidence type="ECO:0000305" key="2"/>
<sequence>MAPAWSFLLALLLLSCNAICSLGCHLPHTHSLPNRRVLTLLRQLRRVSPSSCLQDRNDFAFPQEALGGSQLQKAQAISVLHEVTQHTFQLFSTEGSAAAWDESLLDKLRAALDQQLTDLQACLRQEEGLRGAPLLKEDASLAVRKYFHRLTLYLREKRHNPCAWEVVRAEVMRAFSSSTNLQERFRRKD</sequence>
<proteinExistence type="evidence at transcript level"/>
<reference key="1">
    <citation type="journal article" date="1996" name="Immunogenetics">
        <title>The cloning of cattle interferon-A subtypes isolated from the gut epithelium of rotavirus-infected calves.</title>
        <authorList>
            <person name="Chaplin P.J."/>
            <person name="Parsons K.R."/>
            <person name="Collins B.A."/>
        </authorList>
    </citation>
    <scope>NUCLEOTIDE SEQUENCE [MRNA]</scope>
    <source>
        <tissue>Intestine</tissue>
    </source>
</reference>
<gene>
    <name type="primary">IFNAH</name>
    <name type="synonym">IFNA8</name>
</gene>